<reference key="1">
    <citation type="submission" date="2005-06" db="EMBL/GenBank/DDBJ databases">
        <title>DNA sequences of macaque genes expressed in brain or testis and its evolutionary implications.</title>
        <authorList>
            <consortium name="International consortium for macaque cDNA sequencing and analysis"/>
        </authorList>
    </citation>
    <scope>NUCLEOTIDE SEQUENCE [LARGE SCALE MRNA]</scope>
    <source>
        <tissue>Parietal cortex</tissue>
    </source>
</reference>
<proteinExistence type="evidence at transcript level"/>
<organism>
    <name type="scientific">Macaca fascicularis</name>
    <name type="common">Crab-eating macaque</name>
    <name type="synonym">Cynomolgus monkey</name>
    <dbReference type="NCBI Taxonomy" id="9541"/>
    <lineage>
        <taxon>Eukaryota</taxon>
        <taxon>Metazoa</taxon>
        <taxon>Chordata</taxon>
        <taxon>Craniata</taxon>
        <taxon>Vertebrata</taxon>
        <taxon>Euteleostomi</taxon>
        <taxon>Mammalia</taxon>
        <taxon>Eutheria</taxon>
        <taxon>Euarchontoglires</taxon>
        <taxon>Primates</taxon>
        <taxon>Haplorrhini</taxon>
        <taxon>Catarrhini</taxon>
        <taxon>Cercopithecidae</taxon>
        <taxon>Cercopithecinae</taxon>
        <taxon>Macaca</taxon>
    </lineage>
</organism>
<evidence type="ECO:0000250" key="1">
    <source>
        <dbReference type="UniProtKB" id="P11983"/>
    </source>
</evidence>
<evidence type="ECO:0000250" key="2">
    <source>
        <dbReference type="UniProtKB" id="P17987"/>
    </source>
</evidence>
<evidence type="ECO:0000305" key="3"/>
<keyword id="KW-0007">Acetylation</keyword>
<keyword id="KW-0067">ATP-binding</keyword>
<keyword id="KW-0143">Chaperone</keyword>
<keyword id="KW-0963">Cytoplasm</keyword>
<keyword id="KW-0206">Cytoskeleton</keyword>
<keyword id="KW-0378">Hydrolase</keyword>
<keyword id="KW-0460">Magnesium</keyword>
<keyword id="KW-0479">Metal-binding</keyword>
<keyword id="KW-0547">Nucleotide-binding</keyword>
<keyword id="KW-0597">Phosphoprotein</keyword>
<keyword id="KW-1185">Reference proteome</keyword>
<sequence length="556" mass="60256">MEGPLSVFGDRSTGEAIRSQNVMAAASIANIVKSSLGPVGLDKMLVDDIGDVTITNDGATILKLLEVEHPAAKVLCELADLQDKEVGDGTTSVVIIAAELLKNADELGKQKIHPTSVISGYRLACKEAVRYINENLIVNTDELGRDCLINAAKTSMSSKIIGINGDFFANMVVDAVLAIKYTDTRGQPRYPVNSVNILKAHGRSQMESKLISGYALNCVVGSQGMPKRIVNAKIACLDFSLQKTKMKLGVQVVITDPEKLDQIRQRESDITKERIQKILATGANVILTTGGIDDMCLKYFVEAGAMAVRRVLKRDLKRIAKASGATILSTLANLEGEETFEAAMLGQAEEVVQERICDDELILIKNTKARTSASIILRGANDFMCDEMERSLHDALCVVKRVLESKSVVPGGGAVEAALSIYLENYATSMGSREQLAIAEFARSLLVIPNTLAVNAAQDSTDLVAKLRAFHNEAQVNPERKNLKWIGLDLSNGKPRDNKQAGVFEPTIVKVKSLKFATEAAITILRIDDLIKLHPESKDDKHGSYEDAVHSGALND</sequence>
<dbReference type="EC" id="3.6.1.-" evidence="2"/>
<dbReference type="EMBL" id="AB169581">
    <property type="protein sequence ID" value="BAE01663.1"/>
    <property type="molecule type" value="mRNA"/>
</dbReference>
<dbReference type="RefSeq" id="NP_001272198.1">
    <property type="nucleotide sequence ID" value="NM_001285269.1"/>
</dbReference>
<dbReference type="SMR" id="Q4R5G2"/>
<dbReference type="STRING" id="9541.ENSMFAP00000033945"/>
<dbReference type="eggNOG" id="KOG0360">
    <property type="taxonomic scope" value="Eukaryota"/>
</dbReference>
<dbReference type="Proteomes" id="UP000233100">
    <property type="component" value="Unplaced"/>
</dbReference>
<dbReference type="GO" id="GO:0005813">
    <property type="term" value="C:centrosome"/>
    <property type="evidence" value="ECO:0007669"/>
    <property type="project" value="UniProtKB-SubCell"/>
</dbReference>
<dbReference type="GO" id="GO:0005832">
    <property type="term" value="C:chaperonin-containing T-complex"/>
    <property type="evidence" value="ECO:0000250"/>
    <property type="project" value="UniProtKB"/>
</dbReference>
<dbReference type="GO" id="GO:0005874">
    <property type="term" value="C:microtubule"/>
    <property type="evidence" value="ECO:0007669"/>
    <property type="project" value="UniProtKB-ARBA"/>
</dbReference>
<dbReference type="GO" id="GO:0005524">
    <property type="term" value="F:ATP binding"/>
    <property type="evidence" value="ECO:0007669"/>
    <property type="project" value="UniProtKB-KW"/>
</dbReference>
<dbReference type="GO" id="GO:0016887">
    <property type="term" value="F:ATP hydrolysis activity"/>
    <property type="evidence" value="ECO:0007669"/>
    <property type="project" value="InterPro"/>
</dbReference>
<dbReference type="GO" id="GO:0140662">
    <property type="term" value="F:ATP-dependent protein folding chaperone"/>
    <property type="evidence" value="ECO:0007669"/>
    <property type="project" value="InterPro"/>
</dbReference>
<dbReference type="GO" id="GO:0051082">
    <property type="term" value="F:unfolded protein binding"/>
    <property type="evidence" value="ECO:0007669"/>
    <property type="project" value="InterPro"/>
</dbReference>
<dbReference type="GO" id="GO:0032212">
    <property type="term" value="P:positive regulation of telomere maintenance via telomerase"/>
    <property type="evidence" value="ECO:0007669"/>
    <property type="project" value="UniProtKB-ARBA"/>
</dbReference>
<dbReference type="GO" id="GO:0050821">
    <property type="term" value="P:protein stabilization"/>
    <property type="evidence" value="ECO:0007669"/>
    <property type="project" value="UniProtKB-ARBA"/>
</dbReference>
<dbReference type="CDD" id="cd03335">
    <property type="entry name" value="TCP1_alpha"/>
    <property type="match status" value="1"/>
</dbReference>
<dbReference type="FunFam" id="3.50.7.10:FF:000009">
    <property type="entry name" value="T-complex protein 1 subunit alpha"/>
    <property type="match status" value="1"/>
</dbReference>
<dbReference type="FunFam" id="3.30.260.10:FF:000022">
    <property type="entry name" value="T-complex protein 1 subunit eta"/>
    <property type="match status" value="1"/>
</dbReference>
<dbReference type="FunFam" id="1.10.560.10:FF:000070">
    <property type="entry name" value="Uncharacterized protein"/>
    <property type="match status" value="1"/>
</dbReference>
<dbReference type="FunFam" id="3.30.260.10:FF:000040">
    <property type="entry name" value="Uncharacterized protein"/>
    <property type="match status" value="1"/>
</dbReference>
<dbReference type="Gene3D" id="3.50.7.10">
    <property type="entry name" value="GroEL"/>
    <property type="match status" value="1"/>
</dbReference>
<dbReference type="Gene3D" id="1.10.560.10">
    <property type="entry name" value="GroEL-like equatorial domain"/>
    <property type="match status" value="1"/>
</dbReference>
<dbReference type="Gene3D" id="3.30.260.10">
    <property type="entry name" value="TCP-1-like chaperonin intermediate domain"/>
    <property type="match status" value="1"/>
</dbReference>
<dbReference type="InterPro" id="IPR012715">
    <property type="entry name" value="Chap_CCT_alpha"/>
</dbReference>
<dbReference type="InterPro" id="IPR017998">
    <property type="entry name" value="Chaperone_TCP-1"/>
</dbReference>
<dbReference type="InterPro" id="IPR002194">
    <property type="entry name" value="Chaperonin_TCP-1_CS"/>
</dbReference>
<dbReference type="InterPro" id="IPR002423">
    <property type="entry name" value="Cpn60/GroEL/TCP-1"/>
</dbReference>
<dbReference type="InterPro" id="IPR027409">
    <property type="entry name" value="GroEL-like_apical_dom_sf"/>
</dbReference>
<dbReference type="InterPro" id="IPR027413">
    <property type="entry name" value="GROEL-like_equatorial_sf"/>
</dbReference>
<dbReference type="InterPro" id="IPR027410">
    <property type="entry name" value="TCP-1-like_intermed_sf"/>
</dbReference>
<dbReference type="InterPro" id="IPR053374">
    <property type="entry name" value="TCP-1_chaperonin"/>
</dbReference>
<dbReference type="InterPro" id="IPR054827">
    <property type="entry name" value="thermosome_alpha"/>
</dbReference>
<dbReference type="NCBIfam" id="TIGR02340">
    <property type="entry name" value="chap_CCT_alpha"/>
    <property type="match status" value="1"/>
</dbReference>
<dbReference type="NCBIfam" id="NF041082">
    <property type="entry name" value="thermosome_alpha"/>
    <property type="match status" value="1"/>
</dbReference>
<dbReference type="NCBIfam" id="NF041083">
    <property type="entry name" value="thermosome_beta"/>
    <property type="match status" value="1"/>
</dbReference>
<dbReference type="PANTHER" id="PTHR11353">
    <property type="entry name" value="CHAPERONIN"/>
    <property type="match status" value="1"/>
</dbReference>
<dbReference type="Pfam" id="PF00118">
    <property type="entry name" value="Cpn60_TCP1"/>
    <property type="match status" value="1"/>
</dbReference>
<dbReference type="PRINTS" id="PR00304">
    <property type="entry name" value="TCOMPLEXTCP1"/>
</dbReference>
<dbReference type="SUPFAM" id="SSF52029">
    <property type="entry name" value="GroEL apical domain-like"/>
    <property type="match status" value="1"/>
</dbReference>
<dbReference type="SUPFAM" id="SSF48592">
    <property type="entry name" value="GroEL equatorial domain-like"/>
    <property type="match status" value="1"/>
</dbReference>
<dbReference type="SUPFAM" id="SSF54849">
    <property type="entry name" value="GroEL-intermediate domain like"/>
    <property type="match status" value="1"/>
</dbReference>
<dbReference type="PROSITE" id="PS00750">
    <property type="entry name" value="TCP1_1"/>
    <property type="match status" value="1"/>
</dbReference>
<dbReference type="PROSITE" id="PS00751">
    <property type="entry name" value="TCP1_2"/>
    <property type="match status" value="1"/>
</dbReference>
<dbReference type="PROSITE" id="PS00995">
    <property type="entry name" value="TCP1_3"/>
    <property type="match status" value="1"/>
</dbReference>
<protein>
    <recommendedName>
        <fullName>T-complex protein 1 subunit alpha</fullName>
        <shortName>TCP-1-alpha</shortName>
        <ecNumber evidence="2">3.6.1.-</ecNumber>
    </recommendedName>
    <alternativeName>
        <fullName>CCT-alpha</fullName>
    </alternativeName>
</protein>
<accession>Q4R5G2</accession>
<comment type="function">
    <text evidence="2">Component of the chaperonin-containing T-complex (TRiC), a molecular chaperone complex that assists the folding of actin, tubulin and other proteins upon ATP hydrolysis. The TRiC complex mediates the folding of WRAP53/TCAB1, thereby regulating telomere maintenance. As part of the TRiC complex may play a role in the assembly of BBSome, a complex involved in ciliogenesis regulating transports vesicles to the cilia.</text>
</comment>
<comment type="catalytic activity">
    <reaction evidence="2">
        <text>ATP + H2O = ADP + phosphate + H(+)</text>
        <dbReference type="Rhea" id="RHEA:13065"/>
        <dbReference type="ChEBI" id="CHEBI:15377"/>
        <dbReference type="ChEBI" id="CHEBI:15378"/>
        <dbReference type="ChEBI" id="CHEBI:30616"/>
        <dbReference type="ChEBI" id="CHEBI:43474"/>
        <dbReference type="ChEBI" id="CHEBI:456216"/>
    </reaction>
</comment>
<comment type="subunit">
    <text evidence="2">Component of the chaperonin-containing T-complex (TRiC), a hexadecamer composed of two identical back-to-back stacked rings enclosing a protein folding chamber. Each ring is made up of eight different subunits: TCP1/CCT1, CCT2, CCT3, CCT4, CCT5, CCT6A/CCT6, CCT7, CCT8. Interacts with PACRG. Interacts with GBA1. Interacts with DLEC1.</text>
</comment>
<comment type="subcellular location">
    <subcellularLocation>
        <location evidence="2">Cytoplasm</location>
        <location evidence="2">Cytosol</location>
    </subcellularLocation>
    <subcellularLocation>
        <location evidence="2">Cytoplasm</location>
        <location evidence="2">Cytoskeleton</location>
        <location evidence="2">Microtubule organizing center</location>
        <location evidence="2">Centrosome</location>
    </subcellularLocation>
</comment>
<comment type="similarity">
    <text evidence="3">Belongs to the TCP-1 chaperonin family.</text>
</comment>
<name>TCPA_MACFA</name>
<gene>
    <name type="primary">TCP1</name>
    <name type="synonym">CCT1</name>
    <name type="ORF">QnpA-12515</name>
</gene>
<feature type="chain" id="PRO_0000273198" description="T-complex protein 1 subunit alpha">
    <location>
        <begin position="1"/>
        <end position="556"/>
    </location>
</feature>
<feature type="binding site" evidence="2">
    <location>
        <position position="37"/>
    </location>
    <ligand>
        <name>ADP</name>
        <dbReference type="ChEBI" id="CHEBI:456216"/>
    </ligand>
</feature>
<feature type="binding site" evidence="2">
    <location>
        <position position="37"/>
    </location>
    <ligand>
        <name>ATP</name>
        <dbReference type="ChEBI" id="CHEBI:30616"/>
    </ligand>
</feature>
<feature type="binding site" evidence="2">
    <location>
        <position position="88"/>
    </location>
    <ligand>
        <name>Mg(2+)</name>
        <dbReference type="ChEBI" id="CHEBI:18420"/>
    </ligand>
</feature>
<feature type="binding site" evidence="2">
    <location>
        <position position="89"/>
    </location>
    <ligand>
        <name>ADP</name>
        <dbReference type="ChEBI" id="CHEBI:456216"/>
    </ligand>
</feature>
<feature type="binding site" evidence="2">
    <location>
        <position position="89"/>
    </location>
    <ligand>
        <name>ATP</name>
        <dbReference type="ChEBI" id="CHEBI:30616"/>
    </ligand>
</feature>
<feature type="binding site" evidence="2">
    <location>
        <position position="90"/>
    </location>
    <ligand>
        <name>ADP</name>
        <dbReference type="ChEBI" id="CHEBI:456216"/>
    </ligand>
</feature>
<feature type="binding site" evidence="2">
    <location>
        <position position="90"/>
    </location>
    <ligand>
        <name>ATP</name>
        <dbReference type="ChEBI" id="CHEBI:30616"/>
    </ligand>
</feature>
<feature type="binding site" evidence="2">
    <location>
        <position position="91"/>
    </location>
    <ligand>
        <name>ADP</name>
        <dbReference type="ChEBI" id="CHEBI:456216"/>
    </ligand>
</feature>
<feature type="binding site" evidence="2">
    <location>
        <position position="91"/>
    </location>
    <ligand>
        <name>ATP</name>
        <dbReference type="ChEBI" id="CHEBI:30616"/>
    </ligand>
</feature>
<feature type="binding site" evidence="2">
    <location>
        <position position="92"/>
    </location>
    <ligand>
        <name>ADP</name>
        <dbReference type="ChEBI" id="CHEBI:456216"/>
    </ligand>
</feature>
<feature type="binding site" evidence="2">
    <location>
        <position position="158"/>
    </location>
    <ligand>
        <name>ADP</name>
        <dbReference type="ChEBI" id="CHEBI:456216"/>
    </ligand>
</feature>
<feature type="binding site" evidence="2">
    <location>
        <position position="159"/>
    </location>
    <ligand>
        <name>ADP</name>
        <dbReference type="ChEBI" id="CHEBI:456216"/>
    </ligand>
</feature>
<feature type="binding site" evidence="2">
    <location>
        <position position="412"/>
    </location>
    <ligand>
        <name>ADP</name>
        <dbReference type="ChEBI" id="CHEBI:456216"/>
    </ligand>
</feature>
<feature type="binding site" evidence="2">
    <location>
        <position position="505"/>
    </location>
    <ligand>
        <name>ADP</name>
        <dbReference type="ChEBI" id="CHEBI:456216"/>
    </ligand>
</feature>
<feature type="modified residue" description="N-acetylmethionine" evidence="2">
    <location>
        <position position="1"/>
    </location>
</feature>
<feature type="modified residue" description="Phosphoserine" evidence="2">
    <location>
        <position position="6"/>
    </location>
</feature>
<feature type="modified residue" description="Phosphotyrosine" evidence="2">
    <location>
        <position position="181"/>
    </location>
</feature>
<feature type="modified residue" description="N6-acetyllysine" evidence="2">
    <location>
        <position position="199"/>
    </location>
</feature>
<feature type="modified residue" description="N6-acetyllysine" evidence="2">
    <location>
        <position position="400"/>
    </location>
</feature>
<feature type="modified residue" description="N6-acetyllysine" evidence="1">
    <location>
        <position position="494"/>
    </location>
</feature>
<feature type="modified residue" description="Phosphoserine" evidence="2">
    <location>
        <position position="544"/>
    </location>
</feature>
<feature type="modified residue" description="Phosphoserine" evidence="2">
    <location>
        <position position="551"/>
    </location>
</feature>